<dbReference type="EMBL" id="AE017196">
    <property type="protein sequence ID" value="AAS14072.1"/>
    <property type="molecule type" value="Genomic_DNA"/>
</dbReference>
<dbReference type="SMR" id="Q73I40"/>
<dbReference type="EnsemblBacteria" id="AAS14072">
    <property type="protein sequence ID" value="AAS14072"/>
    <property type="gene ID" value="WD_0342"/>
</dbReference>
<dbReference type="KEGG" id="wol:WD_0342"/>
<dbReference type="eggNOG" id="COG0257">
    <property type="taxonomic scope" value="Bacteria"/>
</dbReference>
<dbReference type="Proteomes" id="UP000008215">
    <property type="component" value="Chromosome"/>
</dbReference>
<dbReference type="GO" id="GO:1990904">
    <property type="term" value="C:ribonucleoprotein complex"/>
    <property type="evidence" value="ECO:0007669"/>
    <property type="project" value="UniProtKB-KW"/>
</dbReference>
<dbReference type="GO" id="GO:0005840">
    <property type="term" value="C:ribosome"/>
    <property type="evidence" value="ECO:0007669"/>
    <property type="project" value="UniProtKB-KW"/>
</dbReference>
<dbReference type="GO" id="GO:0003735">
    <property type="term" value="F:structural constituent of ribosome"/>
    <property type="evidence" value="ECO:0007669"/>
    <property type="project" value="InterPro"/>
</dbReference>
<dbReference type="GO" id="GO:0006412">
    <property type="term" value="P:translation"/>
    <property type="evidence" value="ECO:0007669"/>
    <property type="project" value="UniProtKB-UniRule"/>
</dbReference>
<dbReference type="HAMAP" id="MF_00251">
    <property type="entry name" value="Ribosomal_bL36"/>
    <property type="match status" value="1"/>
</dbReference>
<dbReference type="InterPro" id="IPR000473">
    <property type="entry name" value="Ribosomal_bL36"/>
</dbReference>
<dbReference type="InterPro" id="IPR035977">
    <property type="entry name" value="Ribosomal_bL36_sp"/>
</dbReference>
<dbReference type="InterPro" id="IPR047621">
    <property type="entry name" value="Ribosomal_L36_bact"/>
</dbReference>
<dbReference type="NCBIfam" id="NF002021">
    <property type="entry name" value="PRK00831.1"/>
    <property type="match status" value="1"/>
</dbReference>
<dbReference type="NCBIfam" id="TIGR01022">
    <property type="entry name" value="rpmJ_bact"/>
    <property type="match status" value="1"/>
</dbReference>
<dbReference type="PANTHER" id="PTHR47781">
    <property type="entry name" value="50S RIBOSOMAL PROTEIN L36 2"/>
    <property type="match status" value="1"/>
</dbReference>
<dbReference type="PANTHER" id="PTHR47781:SF1">
    <property type="entry name" value="LARGE RIBOSOMAL SUBUNIT PROTEIN BL36B"/>
    <property type="match status" value="1"/>
</dbReference>
<dbReference type="Pfam" id="PF00444">
    <property type="entry name" value="Ribosomal_L36"/>
    <property type="match status" value="1"/>
</dbReference>
<dbReference type="SUPFAM" id="SSF57840">
    <property type="entry name" value="Ribosomal protein L36"/>
    <property type="match status" value="1"/>
</dbReference>
<evidence type="ECO:0000255" key="1">
    <source>
        <dbReference type="HAMAP-Rule" id="MF_00251"/>
    </source>
</evidence>
<evidence type="ECO:0000305" key="2"/>
<keyword id="KW-0687">Ribonucleoprotein</keyword>
<keyword id="KW-0689">Ribosomal protein</keyword>
<comment type="similarity">
    <text evidence="1">Belongs to the bacterial ribosomal protein bL36 family.</text>
</comment>
<sequence>MKVKGSLKSHRNRDKNCKVVKRGGKIYIINKVKPRCKARQGS</sequence>
<feature type="chain" id="PRO_0000126297" description="Large ribosomal subunit protein bL36">
    <location>
        <begin position="1"/>
        <end position="42"/>
    </location>
</feature>
<name>RL36_WOLPM</name>
<organism>
    <name type="scientific">Wolbachia pipientis wMel</name>
    <dbReference type="NCBI Taxonomy" id="163164"/>
    <lineage>
        <taxon>Bacteria</taxon>
        <taxon>Pseudomonadati</taxon>
        <taxon>Pseudomonadota</taxon>
        <taxon>Alphaproteobacteria</taxon>
        <taxon>Rickettsiales</taxon>
        <taxon>Anaplasmataceae</taxon>
        <taxon>Wolbachieae</taxon>
        <taxon>Wolbachia</taxon>
    </lineage>
</organism>
<gene>
    <name evidence="1" type="primary">rpmJ</name>
    <name type="ordered locus">WD_0342</name>
</gene>
<protein>
    <recommendedName>
        <fullName evidence="1">Large ribosomal subunit protein bL36</fullName>
    </recommendedName>
    <alternativeName>
        <fullName evidence="2">50S ribosomal protein L36</fullName>
    </alternativeName>
</protein>
<reference key="1">
    <citation type="journal article" date="2004" name="PLoS Biol.">
        <title>Phylogenomics of the reproductive parasite Wolbachia pipientis wMel: a streamlined genome overrun by mobile genetic elements.</title>
        <authorList>
            <person name="Wu M."/>
            <person name="Sun L.V."/>
            <person name="Vamathevan J.J."/>
            <person name="Riegler M."/>
            <person name="DeBoy R.T."/>
            <person name="Brownlie J.C."/>
            <person name="McGraw E.A."/>
            <person name="Martin W."/>
            <person name="Esser C."/>
            <person name="Ahmadinejad N."/>
            <person name="Wiegand C."/>
            <person name="Madupu R."/>
            <person name="Beanan M.J."/>
            <person name="Brinkac L.M."/>
            <person name="Daugherty S.C."/>
            <person name="Durkin A.S."/>
            <person name="Kolonay J.F."/>
            <person name="Nelson W.C."/>
            <person name="Mohamoud Y."/>
            <person name="Lee P."/>
            <person name="Berry K.J."/>
            <person name="Young M.B."/>
            <person name="Utterback T.R."/>
            <person name="Weidman J.F."/>
            <person name="Nierman W.C."/>
            <person name="Paulsen I.T."/>
            <person name="Nelson K.E."/>
            <person name="Tettelin H."/>
            <person name="O'Neill S.L."/>
            <person name="Eisen J.A."/>
        </authorList>
    </citation>
    <scope>NUCLEOTIDE SEQUENCE [LARGE SCALE GENOMIC DNA]</scope>
</reference>
<proteinExistence type="inferred from homology"/>
<accession>Q73I40</accession>